<comment type="function">
    <text evidence="2">Involved in pre-mRNA splicing. May induce cell death, possibly by acting on the transcription and RNA processing of apoptosis-related factors.</text>
</comment>
<comment type="subunit">
    <text evidence="2 4">Interacts with CDK11A, CDK11B, CDK12, CDK13 and POLR2A, the hyperphosphorylated C-terminal domain (CTD) of RNA polymerase II. May form a ternary complex with CDK11B and casein kinase II (CKII). Interacts with pre-mRNA-splicing factors, including at least SRSF1, SRSF2 and SRSF7/SLU7.</text>
</comment>
<comment type="subcellular location">
    <subcellularLocation>
        <location evidence="2">Nucleus speckle</location>
    </subcellularLocation>
    <subcellularLocation>
        <location evidence="2">Nucleus</location>
        <location evidence="2">Nucleoplasm</location>
    </subcellularLocation>
</comment>
<comment type="alternative products">
    <event type="alternative splicing"/>
    <isoform>
        <id>Q9JJA7-1</id>
        <name>1</name>
        <sequence type="displayed"/>
    </isoform>
    <isoform>
        <id>Q9JJA7-2</id>
        <name>2</name>
        <sequence type="described" ref="VSP_016134 VSP_016135"/>
    </isoform>
    <isoform>
        <id>Q9JJA7-3</id>
        <name>3</name>
        <sequence type="described" ref="VSP_016133"/>
    </isoform>
</comment>
<comment type="tissue specificity">
    <text evidence="5">Widely expressed (at protein level).</text>
</comment>
<comment type="domain">
    <text evidence="1">Contains a RS region (arginine-serine dipeptide repeat) within the C-terminal domain which is the hallmark of the SR family of splicing factors. This region probably plays a role in protein-protein interactions (By similarity).</text>
</comment>
<comment type="miscellaneous">
    <molecule>Isoform 2</molecule>
    <text evidence="9">May be produced at very low levels due to a premature stop codon in the mRNA, leading to nonsense-mediated mRNA decay.</text>
</comment>
<comment type="similarity">
    <text evidence="9">Belongs to the cyclin family. Cyclin L subfamily.</text>
</comment>
<comment type="sequence caution" evidence="9">
    <conflict type="erroneous initiation">
        <sequence resource="EMBL-CDS" id="AAC52504"/>
    </conflict>
    <text>Truncated N-terminus.</text>
</comment>
<comment type="sequence caution" evidence="9">
    <conflict type="erroneous termination">
        <sequence resource="EMBL-CDS" id="AAC52504"/>
    </conflict>
    <text>Extended C-terminus.</text>
</comment>
<feature type="chain" id="PRO_0000080488" description="Cyclin-L2">
    <location>
        <begin position="1"/>
        <end position="518"/>
    </location>
</feature>
<feature type="region of interest" description="Cyclin-like 1">
    <location>
        <begin position="81"/>
        <end position="183"/>
    </location>
</feature>
<feature type="region of interest" description="Cyclin-like 2">
    <location>
        <begin position="196"/>
        <end position="280"/>
    </location>
</feature>
<feature type="region of interest" description="Disordered" evidence="3">
    <location>
        <begin position="310"/>
        <end position="518"/>
    </location>
</feature>
<feature type="region of interest" description="RS">
    <location>
        <begin position="382"/>
        <end position="420"/>
    </location>
</feature>
<feature type="compositionally biased region" description="Low complexity" evidence="3">
    <location>
        <begin position="405"/>
        <end position="427"/>
    </location>
</feature>
<feature type="compositionally biased region" description="Basic and acidic residues" evidence="3">
    <location>
        <begin position="438"/>
        <end position="450"/>
    </location>
</feature>
<feature type="compositionally biased region" description="Basic residues" evidence="3">
    <location>
        <begin position="455"/>
        <end position="469"/>
    </location>
</feature>
<feature type="compositionally biased region" description="Basic and acidic residues" evidence="3">
    <location>
        <begin position="470"/>
        <end position="479"/>
    </location>
</feature>
<feature type="compositionally biased region" description="Basic and acidic residues" evidence="3">
    <location>
        <begin position="487"/>
        <end position="512"/>
    </location>
</feature>
<feature type="modified residue" description="Phosphoserine" evidence="2">
    <location>
        <position position="328"/>
    </location>
</feature>
<feature type="modified residue" description="Phosphoserine" evidence="2">
    <location>
        <position position="335"/>
    </location>
</feature>
<feature type="modified residue" description="Phosphoserine" evidence="2">
    <location>
        <position position="345"/>
    </location>
</feature>
<feature type="modified residue" description="Phosphoserine" evidence="2">
    <location>
        <position position="348"/>
    </location>
</feature>
<feature type="modified residue" description="Phosphoserine" evidence="10">
    <location>
        <position position="366"/>
    </location>
</feature>
<feature type="splice variant" id="VSP_016133" description="In isoform 3." evidence="8">
    <location>
        <begin position="219"/>
        <end position="518"/>
    </location>
</feature>
<feature type="splice variant" id="VSP_016134" description="In isoform 2." evidence="6 7 8">
    <original>NYMNDS</original>
    <variation>VASEGK</variation>
    <location>
        <begin position="219"/>
        <end position="224"/>
    </location>
</feature>
<feature type="splice variant" id="VSP_016135" description="In isoform 2." evidence="6 7 8">
    <location>
        <begin position="225"/>
        <end position="518"/>
    </location>
</feature>
<feature type="sequence conflict" description="In Ref. 4; BAE41413/BAE33556, 6; EDL15040 and 7; AAI32296." evidence="9" ref="4 6 7">
    <original>S</original>
    <variation>A</variation>
    <location>
        <position position="16"/>
    </location>
</feature>
<feature type="sequence conflict" description="In Ref. 4; BAC26255." evidence="9" ref="4">
    <original>K</original>
    <variation>R</variation>
    <location>
        <position position="131"/>
    </location>
</feature>
<feature type="sequence conflict" description="In Ref. 7; AAH03773." evidence="9" ref="7">
    <original>Y</original>
    <variation>F</variation>
    <location>
        <position position="282"/>
    </location>
</feature>
<feature type="sequence conflict" description="In Ref. 6; EDL15040 and 7; AAH03773/AAI32296." evidence="9" ref="6 7">
    <original>T</original>
    <variation>S</variation>
    <location>
        <position position="317"/>
    </location>
</feature>
<feature type="sequence conflict" description="In Ref. 7; AAH03773/AAH83055 and 8; AAC52504." evidence="9" ref="7 8">
    <original>E</original>
    <variation>VE</variation>
    <location>
        <position position="334"/>
    </location>
</feature>
<proteinExistence type="evidence at protein level"/>
<gene>
    <name type="primary">Ccnl2</name>
    <name type="synonym">Ania6b</name>
    <name type="ORF">MNCb-5160</name>
</gene>
<dbReference type="EMBL" id="AF211859">
    <property type="protein sequence ID" value="AAF23011.1"/>
    <property type="molecule type" value="mRNA"/>
</dbReference>
<dbReference type="EMBL" id="AY337018">
    <property type="protein sequence ID" value="AAQ01205.1"/>
    <property type="molecule type" value="mRNA"/>
</dbReference>
<dbReference type="EMBL" id="AB041605">
    <property type="protein sequence ID" value="BAA95088.1"/>
    <property type="molecule type" value="mRNA"/>
</dbReference>
<dbReference type="EMBL" id="AK007552">
    <property type="protein sequence ID" value="BAB25103.1"/>
    <property type="molecule type" value="mRNA"/>
</dbReference>
<dbReference type="EMBL" id="AK029033">
    <property type="protein sequence ID" value="BAC26255.1"/>
    <property type="molecule type" value="mRNA"/>
</dbReference>
<dbReference type="EMBL" id="AK048244">
    <property type="protein sequence ID" value="BAE43334.1"/>
    <property type="molecule type" value="mRNA"/>
</dbReference>
<dbReference type="EMBL" id="AK156037">
    <property type="protein sequence ID" value="BAE33556.1"/>
    <property type="molecule type" value="mRNA"/>
</dbReference>
<dbReference type="EMBL" id="AK169857">
    <property type="protein sequence ID" value="BAE41413.1"/>
    <property type="molecule type" value="mRNA"/>
</dbReference>
<dbReference type="EMBL" id="AL670236">
    <property type="status" value="NOT_ANNOTATED_CDS"/>
    <property type="molecule type" value="Genomic_DNA"/>
</dbReference>
<dbReference type="EMBL" id="CH466594">
    <property type="protein sequence ID" value="EDL15040.1"/>
    <property type="molecule type" value="Genomic_DNA"/>
</dbReference>
<dbReference type="EMBL" id="BC003773">
    <property type="protein sequence ID" value="AAH03773.2"/>
    <property type="molecule type" value="mRNA"/>
</dbReference>
<dbReference type="EMBL" id="BC023747">
    <property type="status" value="NOT_ANNOTATED_CDS"/>
    <property type="molecule type" value="mRNA"/>
</dbReference>
<dbReference type="EMBL" id="BC083055">
    <property type="protein sequence ID" value="AAH83055.1"/>
    <property type="molecule type" value="mRNA"/>
</dbReference>
<dbReference type="EMBL" id="BC132295">
    <property type="protein sequence ID" value="AAI32296.1"/>
    <property type="molecule type" value="mRNA"/>
</dbReference>
<dbReference type="EMBL" id="U37351">
    <property type="protein sequence ID" value="AAC52504.1"/>
    <property type="status" value="ALT_SEQ"/>
    <property type="molecule type" value="mRNA"/>
</dbReference>
<dbReference type="CCDS" id="CCDS19042.1">
    <molecule id="Q9JJA7-1"/>
</dbReference>
<dbReference type="RefSeq" id="NP_001388235.1">
    <molecule id="Q9JJA7-2"/>
    <property type="nucleotide sequence ID" value="NM_001401306.1"/>
</dbReference>
<dbReference type="RefSeq" id="NP_997561.1">
    <molecule id="Q9JJA7-1"/>
    <property type="nucleotide sequence ID" value="NM_207678.3"/>
</dbReference>
<dbReference type="SMR" id="Q9JJA7"/>
<dbReference type="BioGRID" id="207786">
    <property type="interactions" value="17"/>
</dbReference>
<dbReference type="ComplexPortal" id="CPX-350">
    <property type="entry name" value="Cyclin L2-CDK11B(p110) complex"/>
</dbReference>
<dbReference type="ComplexPortal" id="CPX-353">
    <property type="entry name" value="Cyclin L2-CDK11B(p58) complex"/>
</dbReference>
<dbReference type="FunCoup" id="Q9JJA7">
    <property type="interactions" value="4004"/>
</dbReference>
<dbReference type="STRING" id="10090.ENSMUSP00000030944"/>
<dbReference type="iPTMnet" id="Q9JJA7"/>
<dbReference type="PhosphoSitePlus" id="Q9JJA7"/>
<dbReference type="jPOST" id="Q9JJA7"/>
<dbReference type="PaxDb" id="10090-ENSMUSP00000030944"/>
<dbReference type="PeptideAtlas" id="Q9JJA7"/>
<dbReference type="ProteomicsDB" id="281426">
    <molecule id="Q9JJA7-1"/>
</dbReference>
<dbReference type="ProteomicsDB" id="281427">
    <molecule id="Q9JJA7-2"/>
</dbReference>
<dbReference type="ProteomicsDB" id="281428">
    <molecule id="Q9JJA7-3"/>
</dbReference>
<dbReference type="Pumba" id="Q9JJA7"/>
<dbReference type="Antibodypedia" id="26320">
    <property type="antibodies" value="130 antibodies from 26 providers"/>
</dbReference>
<dbReference type="DNASU" id="56036"/>
<dbReference type="Ensembl" id="ENSMUST00000030944.11">
    <molecule id="Q9JJA7-1"/>
    <property type="protein sequence ID" value="ENSMUSP00000030944.5"/>
    <property type="gene ID" value="ENSMUSG00000029068.17"/>
</dbReference>
<dbReference type="GeneID" id="56036"/>
<dbReference type="KEGG" id="mmu:56036"/>
<dbReference type="UCSC" id="uc008wev.1">
    <molecule id="Q9JJA7-3"/>
    <property type="organism name" value="mouse"/>
</dbReference>
<dbReference type="UCSC" id="uc008wew.1">
    <molecule id="Q9JJA7-1"/>
    <property type="organism name" value="mouse"/>
</dbReference>
<dbReference type="AGR" id="MGI:1927119"/>
<dbReference type="CTD" id="81669"/>
<dbReference type="MGI" id="MGI:1927119">
    <property type="gene designation" value="Ccnl2"/>
</dbReference>
<dbReference type="VEuPathDB" id="HostDB:ENSMUSG00000029068"/>
<dbReference type="eggNOG" id="KOG0835">
    <property type="taxonomic scope" value="Eukaryota"/>
</dbReference>
<dbReference type="GeneTree" id="ENSGT00940000159239"/>
<dbReference type="HOGENOM" id="CLU_022000_6_1_1"/>
<dbReference type="InParanoid" id="Q9JJA7"/>
<dbReference type="OMA" id="HESESQC"/>
<dbReference type="OrthoDB" id="10264655at2759"/>
<dbReference type="PhylomeDB" id="Q9JJA7"/>
<dbReference type="TreeFam" id="TF101011"/>
<dbReference type="BioGRID-ORCS" id="56036">
    <property type="hits" value="2 hits in 83 CRISPR screens"/>
</dbReference>
<dbReference type="ChiTaRS" id="Ccnl2">
    <property type="organism name" value="mouse"/>
</dbReference>
<dbReference type="PRO" id="PR:Q9JJA7"/>
<dbReference type="Proteomes" id="UP000000589">
    <property type="component" value="Chromosome 4"/>
</dbReference>
<dbReference type="RNAct" id="Q9JJA7">
    <property type="molecule type" value="protein"/>
</dbReference>
<dbReference type="Bgee" id="ENSMUSG00000029068">
    <property type="expression patterns" value="Expressed in secondary palatal shelf and 277 other cell types or tissues"/>
</dbReference>
<dbReference type="ExpressionAtlas" id="Q9JJA7">
    <property type="expression patterns" value="baseline and differential"/>
</dbReference>
<dbReference type="GO" id="GO:0000307">
    <property type="term" value="C:cyclin-dependent protein kinase holoenzyme complex"/>
    <property type="evidence" value="ECO:0000250"/>
    <property type="project" value="ComplexPortal"/>
</dbReference>
<dbReference type="GO" id="GO:0016607">
    <property type="term" value="C:nuclear speck"/>
    <property type="evidence" value="ECO:0007669"/>
    <property type="project" value="UniProtKB-SubCell"/>
</dbReference>
<dbReference type="GO" id="GO:0005634">
    <property type="term" value="C:nucleus"/>
    <property type="evidence" value="ECO:0000266"/>
    <property type="project" value="MGI"/>
</dbReference>
<dbReference type="GO" id="GO:0016538">
    <property type="term" value="F:cyclin-dependent protein serine/threonine kinase regulator activity"/>
    <property type="evidence" value="ECO:0007669"/>
    <property type="project" value="InterPro"/>
</dbReference>
<dbReference type="GO" id="GO:0042981">
    <property type="term" value="P:regulation of apoptotic process"/>
    <property type="evidence" value="ECO:0000303"/>
    <property type="project" value="ComplexPortal"/>
</dbReference>
<dbReference type="GO" id="GO:0051726">
    <property type="term" value="P:regulation of cell cycle"/>
    <property type="evidence" value="ECO:0000303"/>
    <property type="project" value="ComplexPortal"/>
</dbReference>
<dbReference type="GO" id="GO:0046605">
    <property type="term" value="P:regulation of centrosome cycle"/>
    <property type="evidence" value="ECO:0000303"/>
    <property type="project" value="ComplexPortal"/>
</dbReference>
<dbReference type="GO" id="GO:0043484">
    <property type="term" value="P:regulation of RNA splicing"/>
    <property type="evidence" value="ECO:0000250"/>
    <property type="project" value="ComplexPortal"/>
</dbReference>
<dbReference type="GO" id="GO:0006357">
    <property type="term" value="P:regulation of transcription by RNA polymerase II"/>
    <property type="evidence" value="ECO:0007669"/>
    <property type="project" value="InterPro"/>
</dbReference>
<dbReference type="CDD" id="cd20590">
    <property type="entry name" value="CYCLIN_CCNL2_rpt1"/>
    <property type="match status" value="1"/>
</dbReference>
<dbReference type="CDD" id="cd20593">
    <property type="entry name" value="CYCLIN_CCNL2_rpt2"/>
    <property type="match status" value="1"/>
</dbReference>
<dbReference type="FunFam" id="1.10.472.10:FF:000014">
    <property type="entry name" value="cyclin-L1 isoform X1"/>
    <property type="match status" value="1"/>
</dbReference>
<dbReference type="FunFam" id="1.10.472.10:FF:000016">
    <property type="entry name" value="cyclin-L1 isoform X1"/>
    <property type="match status" value="1"/>
</dbReference>
<dbReference type="Gene3D" id="1.10.472.10">
    <property type="entry name" value="Cyclin-like"/>
    <property type="match status" value="2"/>
</dbReference>
<dbReference type="InterPro" id="IPR013763">
    <property type="entry name" value="Cyclin-like_dom"/>
</dbReference>
<dbReference type="InterPro" id="IPR036915">
    <property type="entry name" value="Cyclin-like_sf"/>
</dbReference>
<dbReference type="InterPro" id="IPR043198">
    <property type="entry name" value="Cyclin/Ssn8"/>
</dbReference>
<dbReference type="InterPro" id="IPR004367">
    <property type="entry name" value="Cyclin_C-dom"/>
</dbReference>
<dbReference type="InterPro" id="IPR006671">
    <property type="entry name" value="Cyclin_N"/>
</dbReference>
<dbReference type="PANTHER" id="PTHR10026">
    <property type="entry name" value="CYCLIN"/>
    <property type="match status" value="1"/>
</dbReference>
<dbReference type="Pfam" id="PF02984">
    <property type="entry name" value="Cyclin_C"/>
    <property type="match status" value="1"/>
</dbReference>
<dbReference type="Pfam" id="PF00134">
    <property type="entry name" value="Cyclin_N"/>
    <property type="match status" value="1"/>
</dbReference>
<dbReference type="PIRSF" id="PIRSF036580">
    <property type="entry name" value="Cyclin_L"/>
    <property type="match status" value="1"/>
</dbReference>
<dbReference type="SMART" id="SM00385">
    <property type="entry name" value="CYCLIN"/>
    <property type="match status" value="2"/>
</dbReference>
<dbReference type="SMART" id="SM01332">
    <property type="entry name" value="Cyclin_C"/>
    <property type="match status" value="1"/>
</dbReference>
<dbReference type="SUPFAM" id="SSF47954">
    <property type="entry name" value="Cyclin-like"/>
    <property type="match status" value="2"/>
</dbReference>
<name>CCNL2_MOUSE</name>
<organism>
    <name type="scientific">Mus musculus</name>
    <name type="common">Mouse</name>
    <dbReference type="NCBI Taxonomy" id="10090"/>
    <lineage>
        <taxon>Eukaryota</taxon>
        <taxon>Metazoa</taxon>
        <taxon>Chordata</taxon>
        <taxon>Craniata</taxon>
        <taxon>Vertebrata</taxon>
        <taxon>Euteleostomi</taxon>
        <taxon>Mammalia</taxon>
        <taxon>Eutheria</taxon>
        <taxon>Euarchontoglires</taxon>
        <taxon>Glires</taxon>
        <taxon>Rodentia</taxon>
        <taxon>Myomorpha</taxon>
        <taxon>Muroidea</taxon>
        <taxon>Muridae</taxon>
        <taxon>Murinae</taxon>
        <taxon>Mus</taxon>
        <taxon>Mus</taxon>
    </lineage>
</organism>
<reference key="1">
    <citation type="journal article" date="2001" name="Neuron">
        <title>Dopamine and glutamate induce distinct striatal splice forms of Ania-6, an RNA polymerase II-associated cyclin.</title>
        <authorList>
            <person name="Berke J.D."/>
            <person name="Sgambato V."/>
            <person name="Zhu P.-P."/>
            <person name="Lavoie B."/>
            <person name="Vincent M."/>
            <person name="Krause M."/>
            <person name="Hyman S.E."/>
        </authorList>
    </citation>
    <scope>NUCLEOTIDE SEQUENCE [MRNA] (ISOFORM 2)</scope>
    <source>
        <strain>C57BL/6J</strain>
    </source>
</reference>
<reference key="2">
    <citation type="journal article" date="2004" name="J. Biol. Chem.">
        <title>Cyclin L2, a novel RNA polymerase II-associated cyclin, is involved in pre-mRNA splicing and induces apoptosis of human hepatocellular carcinoma cells.</title>
        <authorList>
            <person name="Yang L."/>
            <person name="Li N."/>
            <person name="Wang C."/>
            <person name="Yu Y."/>
            <person name="Yuan L."/>
            <person name="Zhang M."/>
            <person name="Cao X."/>
        </authorList>
    </citation>
    <scope>NUCLEOTIDE SEQUENCE [MRNA] (ISOFORM 1)</scope>
    <source>
        <strain>C57BL/6J</strain>
    </source>
</reference>
<reference key="3">
    <citation type="submission" date="2000-04" db="EMBL/GenBank/DDBJ databases">
        <title>Isolation of full-length cDNA clones from mouse brain cDNA library made by oligo-capping method.</title>
        <authorList>
            <person name="Osada N."/>
            <person name="Kusuda J."/>
            <person name="Tanuma R."/>
            <person name="Ito A."/>
            <person name="Hirata M."/>
            <person name="Sugano S."/>
            <person name="Hashimoto K."/>
        </authorList>
    </citation>
    <scope>NUCLEOTIDE SEQUENCE [LARGE SCALE MRNA] (ISOFORM 1)</scope>
    <source>
        <strain>C57BL/6J</strain>
        <tissue>Brain</tissue>
    </source>
</reference>
<reference key="4">
    <citation type="journal article" date="2005" name="Science">
        <title>The transcriptional landscape of the mammalian genome.</title>
        <authorList>
            <person name="Carninci P."/>
            <person name="Kasukawa T."/>
            <person name="Katayama S."/>
            <person name="Gough J."/>
            <person name="Frith M.C."/>
            <person name="Maeda N."/>
            <person name="Oyama R."/>
            <person name="Ravasi T."/>
            <person name="Lenhard B."/>
            <person name="Wells C."/>
            <person name="Kodzius R."/>
            <person name="Shimokawa K."/>
            <person name="Bajic V.B."/>
            <person name="Brenner S.E."/>
            <person name="Batalov S."/>
            <person name="Forrest A.R."/>
            <person name="Zavolan M."/>
            <person name="Davis M.J."/>
            <person name="Wilming L.G."/>
            <person name="Aidinis V."/>
            <person name="Allen J.E."/>
            <person name="Ambesi-Impiombato A."/>
            <person name="Apweiler R."/>
            <person name="Aturaliya R.N."/>
            <person name="Bailey T.L."/>
            <person name="Bansal M."/>
            <person name="Baxter L."/>
            <person name="Beisel K.W."/>
            <person name="Bersano T."/>
            <person name="Bono H."/>
            <person name="Chalk A.M."/>
            <person name="Chiu K.P."/>
            <person name="Choudhary V."/>
            <person name="Christoffels A."/>
            <person name="Clutterbuck D.R."/>
            <person name="Crowe M.L."/>
            <person name="Dalla E."/>
            <person name="Dalrymple B.P."/>
            <person name="de Bono B."/>
            <person name="Della Gatta G."/>
            <person name="di Bernardo D."/>
            <person name="Down T."/>
            <person name="Engstrom P."/>
            <person name="Fagiolini M."/>
            <person name="Faulkner G."/>
            <person name="Fletcher C.F."/>
            <person name="Fukushima T."/>
            <person name="Furuno M."/>
            <person name="Futaki S."/>
            <person name="Gariboldi M."/>
            <person name="Georgii-Hemming P."/>
            <person name="Gingeras T.R."/>
            <person name="Gojobori T."/>
            <person name="Green R.E."/>
            <person name="Gustincich S."/>
            <person name="Harbers M."/>
            <person name="Hayashi Y."/>
            <person name="Hensch T.K."/>
            <person name="Hirokawa N."/>
            <person name="Hill D."/>
            <person name="Huminiecki L."/>
            <person name="Iacono M."/>
            <person name="Ikeo K."/>
            <person name="Iwama A."/>
            <person name="Ishikawa T."/>
            <person name="Jakt M."/>
            <person name="Kanapin A."/>
            <person name="Katoh M."/>
            <person name="Kawasawa Y."/>
            <person name="Kelso J."/>
            <person name="Kitamura H."/>
            <person name="Kitano H."/>
            <person name="Kollias G."/>
            <person name="Krishnan S.P."/>
            <person name="Kruger A."/>
            <person name="Kummerfeld S.K."/>
            <person name="Kurochkin I.V."/>
            <person name="Lareau L.F."/>
            <person name="Lazarevic D."/>
            <person name="Lipovich L."/>
            <person name="Liu J."/>
            <person name="Liuni S."/>
            <person name="McWilliam S."/>
            <person name="Madan Babu M."/>
            <person name="Madera M."/>
            <person name="Marchionni L."/>
            <person name="Matsuda H."/>
            <person name="Matsuzawa S."/>
            <person name="Miki H."/>
            <person name="Mignone F."/>
            <person name="Miyake S."/>
            <person name="Morris K."/>
            <person name="Mottagui-Tabar S."/>
            <person name="Mulder N."/>
            <person name="Nakano N."/>
            <person name="Nakauchi H."/>
            <person name="Ng P."/>
            <person name="Nilsson R."/>
            <person name="Nishiguchi S."/>
            <person name="Nishikawa S."/>
            <person name="Nori F."/>
            <person name="Ohara O."/>
            <person name="Okazaki Y."/>
            <person name="Orlando V."/>
            <person name="Pang K.C."/>
            <person name="Pavan W.J."/>
            <person name="Pavesi G."/>
            <person name="Pesole G."/>
            <person name="Petrovsky N."/>
            <person name="Piazza S."/>
            <person name="Reed J."/>
            <person name="Reid J.F."/>
            <person name="Ring B.Z."/>
            <person name="Ringwald M."/>
            <person name="Rost B."/>
            <person name="Ruan Y."/>
            <person name="Salzberg S.L."/>
            <person name="Sandelin A."/>
            <person name="Schneider C."/>
            <person name="Schoenbach C."/>
            <person name="Sekiguchi K."/>
            <person name="Semple C.A."/>
            <person name="Seno S."/>
            <person name="Sessa L."/>
            <person name="Sheng Y."/>
            <person name="Shibata Y."/>
            <person name="Shimada H."/>
            <person name="Shimada K."/>
            <person name="Silva D."/>
            <person name="Sinclair B."/>
            <person name="Sperling S."/>
            <person name="Stupka E."/>
            <person name="Sugiura K."/>
            <person name="Sultana R."/>
            <person name="Takenaka Y."/>
            <person name="Taki K."/>
            <person name="Tammoja K."/>
            <person name="Tan S.L."/>
            <person name="Tang S."/>
            <person name="Taylor M.S."/>
            <person name="Tegner J."/>
            <person name="Teichmann S.A."/>
            <person name="Ueda H.R."/>
            <person name="van Nimwegen E."/>
            <person name="Verardo R."/>
            <person name="Wei C.L."/>
            <person name="Yagi K."/>
            <person name="Yamanishi H."/>
            <person name="Zabarovsky E."/>
            <person name="Zhu S."/>
            <person name="Zimmer A."/>
            <person name="Hide W."/>
            <person name="Bult C."/>
            <person name="Grimmond S.M."/>
            <person name="Teasdale R.D."/>
            <person name="Liu E.T."/>
            <person name="Brusic V."/>
            <person name="Quackenbush J."/>
            <person name="Wahlestedt C."/>
            <person name="Mattick J.S."/>
            <person name="Hume D.A."/>
            <person name="Kai C."/>
            <person name="Sasaki D."/>
            <person name="Tomaru Y."/>
            <person name="Fukuda S."/>
            <person name="Kanamori-Katayama M."/>
            <person name="Suzuki M."/>
            <person name="Aoki J."/>
            <person name="Arakawa T."/>
            <person name="Iida J."/>
            <person name="Imamura K."/>
            <person name="Itoh M."/>
            <person name="Kato T."/>
            <person name="Kawaji H."/>
            <person name="Kawagashira N."/>
            <person name="Kawashima T."/>
            <person name="Kojima M."/>
            <person name="Kondo S."/>
            <person name="Konno H."/>
            <person name="Nakano K."/>
            <person name="Ninomiya N."/>
            <person name="Nishio T."/>
            <person name="Okada M."/>
            <person name="Plessy C."/>
            <person name="Shibata K."/>
            <person name="Shiraki T."/>
            <person name="Suzuki S."/>
            <person name="Tagami M."/>
            <person name="Waki K."/>
            <person name="Watahiki A."/>
            <person name="Okamura-Oho Y."/>
            <person name="Suzuki H."/>
            <person name="Kawai J."/>
            <person name="Hayashizaki Y."/>
        </authorList>
    </citation>
    <scope>NUCLEOTIDE SEQUENCE [LARGE SCALE MRNA] (ISOFORMS 2 AND 3)</scope>
    <source>
        <strain>C57BL/6J</strain>
        <strain>NOD</strain>
        <tissue>Head</tissue>
        <tissue>Pancreas</tissue>
        <tissue>Skin</tissue>
        <tissue>Spleen</tissue>
    </source>
</reference>
<reference key="5">
    <citation type="journal article" date="2009" name="PLoS Biol.">
        <title>Lineage-specific biology revealed by a finished genome assembly of the mouse.</title>
        <authorList>
            <person name="Church D.M."/>
            <person name="Goodstadt L."/>
            <person name="Hillier L.W."/>
            <person name="Zody M.C."/>
            <person name="Goldstein S."/>
            <person name="She X."/>
            <person name="Bult C.J."/>
            <person name="Agarwala R."/>
            <person name="Cherry J.L."/>
            <person name="DiCuccio M."/>
            <person name="Hlavina W."/>
            <person name="Kapustin Y."/>
            <person name="Meric P."/>
            <person name="Maglott D."/>
            <person name="Birtle Z."/>
            <person name="Marques A.C."/>
            <person name="Graves T."/>
            <person name="Zhou S."/>
            <person name="Teague B."/>
            <person name="Potamousis K."/>
            <person name="Churas C."/>
            <person name="Place M."/>
            <person name="Herschleb J."/>
            <person name="Runnheim R."/>
            <person name="Forrest D."/>
            <person name="Amos-Landgraf J."/>
            <person name="Schwartz D.C."/>
            <person name="Cheng Z."/>
            <person name="Lindblad-Toh K."/>
            <person name="Eichler E.E."/>
            <person name="Ponting C.P."/>
        </authorList>
    </citation>
    <scope>NUCLEOTIDE SEQUENCE [LARGE SCALE GENOMIC DNA]</scope>
    <source>
        <strain>C57BL/6J</strain>
    </source>
</reference>
<reference key="6">
    <citation type="submission" date="2005-07" db="EMBL/GenBank/DDBJ databases">
        <authorList>
            <person name="Mural R.J."/>
            <person name="Adams M.D."/>
            <person name="Myers E.W."/>
            <person name="Smith H.O."/>
            <person name="Venter J.C."/>
        </authorList>
    </citation>
    <scope>NUCLEOTIDE SEQUENCE [LARGE SCALE GENOMIC DNA]</scope>
</reference>
<reference key="7">
    <citation type="journal article" date="2004" name="Genome Res.">
        <title>The status, quality, and expansion of the NIH full-length cDNA project: the Mammalian Gene Collection (MGC).</title>
        <authorList>
            <consortium name="The MGC Project Team"/>
        </authorList>
    </citation>
    <scope>NUCLEOTIDE SEQUENCE [LARGE SCALE MRNA] (ISOFORMS 1 AND 2)</scope>
    <source>
        <strain>FVB/N</strain>
        <tissue>Brain</tissue>
        <tissue>Mammary gland</tissue>
    </source>
</reference>
<reference key="8">
    <citation type="journal article" date="1996" name="Anat. Rec.">
        <title>Patterns of gene expression along the crypt-villus axis in mouse jejunal epithelium.</title>
        <authorList>
            <person name="Cheng H."/>
            <person name="Bjerknes M."/>
        </authorList>
    </citation>
    <scope>NUCLEOTIDE SEQUENCE [MRNA] OF 321-518</scope>
    <source>
        <strain>BALB/cJ</strain>
        <tissue>Jejunal epithelium</tissue>
    </source>
</reference>
<reference key="9">
    <citation type="journal article" date="2007" name="Biochem. Biophys. Res. Commun.">
        <title>CDK13/CDC2L5 interacts with L-type cyclins and regulates alternative splicing.</title>
        <authorList>
            <person name="Chen H.H."/>
            <person name="Wong Y.H."/>
            <person name="Geneviere A.M."/>
            <person name="Fann M.J."/>
        </authorList>
    </citation>
    <scope>INTERACTION CDK13</scope>
</reference>
<reference key="10">
    <citation type="journal article" date="2008" name="J. Biol. Chem.">
        <title>Characterization of cyclin L1 and L2 interactions with CDK11 and splicing factors: influence of cyclin L isoforms on splice site selection.</title>
        <authorList>
            <person name="Loyer P."/>
            <person name="Trembley J.H."/>
            <person name="Grenet J.A."/>
            <person name="Busson A."/>
            <person name="Corlu A."/>
            <person name="Zhao W."/>
            <person name="Kocak M."/>
            <person name="Kidd V.J."/>
            <person name="Lahti J.M."/>
        </authorList>
    </citation>
    <scope>TISSUE SPECIFICITY</scope>
</reference>
<reference key="11">
    <citation type="journal article" date="2010" name="Cell">
        <title>A tissue-specific atlas of mouse protein phosphorylation and expression.</title>
        <authorList>
            <person name="Huttlin E.L."/>
            <person name="Jedrychowski M.P."/>
            <person name="Elias J.E."/>
            <person name="Goswami T."/>
            <person name="Rad R."/>
            <person name="Beausoleil S.A."/>
            <person name="Villen J."/>
            <person name="Haas W."/>
            <person name="Sowa M.E."/>
            <person name="Gygi S.P."/>
        </authorList>
    </citation>
    <scope>PHOSPHORYLATION [LARGE SCALE ANALYSIS] AT SER-366</scope>
    <scope>IDENTIFICATION BY MASS SPECTROMETRY [LARGE SCALE ANALYSIS]</scope>
    <source>
        <tissue>Brown adipose tissue</tissue>
        <tissue>Heart</tissue>
        <tissue>Kidney</tissue>
        <tissue>Liver</tissue>
        <tissue>Lung</tissue>
        <tissue>Pancreas</tissue>
        <tissue>Spleen</tissue>
        <tissue>Testis</tissue>
    </source>
</reference>
<accession>Q9JJA7</accession>
<accession>A2AD95</accession>
<accession>A2RSY2</accession>
<accession>Q5XK66</accession>
<accession>Q60995</accession>
<accession>Q8C136</accession>
<accession>Q8CIJ8</accession>
<accession>Q99L73</accession>
<accession>Q9QXH5</accession>
<protein>
    <recommendedName>
        <fullName>Cyclin-L2</fullName>
    </recommendedName>
    <alternativeName>
        <fullName>Cyclin Ania-6b</fullName>
    </alternativeName>
    <alternativeName>
        <fullName>Paneth cell-enhanced expression protein</fullName>
        <shortName>PCEE</shortName>
    </alternativeName>
</protein>
<sequence>MAAAAAGAAGLMAPASAACSSGSAGAAPGSQGVLIGDRLYSGVLITLENCLLPDDKLRFTPSMSSGLDVDTETGLRVVGCELIQAAGILLRLPQVAMATGQVLFQRFFYTKSFVKHSMEHVSMACVHLASKIEEAPRRIRDVINVFHRLRHLREKKKPVPLVLDQEYVNLKNQIIKAERRVLKELGFCVHVKHPHKIIVMYLQVLECERNQHLVQTAWNYMNDSLRTDVFVRFQPESIACACIYLAARTLEIPLPNRPHWFLLFGATEEEIQEICFKILQLYTRKKVDLTHLESEVEKRKHAIEEAKARAKGLLPGTAPGLDSAAGFSPAPKLESPKEGKGGKPSPPSGKSAKRKMEGPKKAQGHSPVNGLLKGQESRSQSRSREQSYSRSPSRSASPKRRKSDSGSTSGGSKSQSRSRSRSDSPPRQVHRGAPYKGSEVRGSRKSKDCKYLTQKPHKSRSRSSSRSRSRSRERTDNSGKYKKKSHYYRDQRRERSRSYERTGHRYERDHPGHSRHRR</sequence>
<evidence type="ECO:0000250" key="1"/>
<evidence type="ECO:0000250" key="2">
    <source>
        <dbReference type="UniProtKB" id="Q96S94"/>
    </source>
</evidence>
<evidence type="ECO:0000256" key="3">
    <source>
        <dbReference type="SAM" id="MobiDB-lite"/>
    </source>
</evidence>
<evidence type="ECO:0000269" key="4">
    <source>
    </source>
</evidence>
<evidence type="ECO:0000269" key="5">
    <source>
    </source>
</evidence>
<evidence type="ECO:0000303" key="6">
    <source>
    </source>
</evidence>
<evidence type="ECO:0000303" key="7">
    <source>
    </source>
</evidence>
<evidence type="ECO:0000303" key="8">
    <source>
    </source>
</evidence>
<evidence type="ECO:0000305" key="9"/>
<evidence type="ECO:0007744" key="10">
    <source>
    </source>
</evidence>
<keyword id="KW-0025">Alternative splicing</keyword>
<keyword id="KW-0195">Cyclin</keyword>
<keyword id="KW-0539">Nucleus</keyword>
<keyword id="KW-0597">Phosphoprotein</keyword>
<keyword id="KW-1185">Reference proteome</keyword>
<keyword id="KW-0677">Repeat</keyword>
<keyword id="KW-0804">Transcription</keyword>
<keyword id="KW-0805">Transcription regulation</keyword>